<dbReference type="EMBL" id="AC117784">
    <property type="status" value="NOT_ANNOTATED_CDS"/>
    <property type="molecule type" value="Genomic_DNA"/>
</dbReference>
<dbReference type="EMBL" id="BC025858">
    <property type="protein sequence ID" value="AAH25858.1"/>
    <property type="molecule type" value="mRNA"/>
</dbReference>
<dbReference type="CCDS" id="CCDS27722.1"/>
<dbReference type="RefSeq" id="NP_001158097.1">
    <property type="nucleotide sequence ID" value="NM_001164625.1"/>
</dbReference>
<dbReference type="RefSeq" id="NP_001158098.1">
    <property type="nucleotide sequence ID" value="NM_001164626.1"/>
</dbReference>
<dbReference type="RefSeq" id="NP_932115.2">
    <property type="nucleotide sequence ID" value="NM_197998.2"/>
</dbReference>
<dbReference type="RefSeq" id="XP_006521510.1">
    <property type="nucleotide sequence ID" value="XM_006521447.2"/>
</dbReference>
<dbReference type="RefSeq" id="XP_006521511.1">
    <property type="nucleotide sequence ID" value="XM_006521448.3"/>
</dbReference>
<dbReference type="FunCoup" id="Q8R3A2">
    <property type="interactions" value="21"/>
</dbReference>
<dbReference type="STRING" id="10090.ENSMUSP00000071772"/>
<dbReference type="PhosphoSitePlus" id="Q8R3A2"/>
<dbReference type="PaxDb" id="10090-ENSMUSP00000121889"/>
<dbReference type="ProteomicsDB" id="280044"/>
<dbReference type="Antibodypedia" id="13834">
    <property type="antibodies" value="33 antibodies from 10 providers"/>
</dbReference>
<dbReference type="DNASU" id="72355"/>
<dbReference type="Ensembl" id="ENSMUST00000071876.13">
    <property type="protein sequence ID" value="ENSMUSP00000071772.7"/>
    <property type="gene ID" value="ENSMUSG00000064284.13"/>
</dbReference>
<dbReference type="Ensembl" id="ENSMUST00000125947.8">
    <property type="protein sequence ID" value="ENSMUSP00000114528.2"/>
    <property type="gene ID" value="ENSMUSG00000064284.13"/>
</dbReference>
<dbReference type="Ensembl" id="ENSMUST00000134631.8">
    <property type="protein sequence ID" value="ENSMUSP00000121889.2"/>
    <property type="gene ID" value="ENSMUSG00000064284.13"/>
</dbReference>
<dbReference type="Ensembl" id="ENSMUST00000144067.8">
    <property type="protein sequence ID" value="ENSMUSP00000119728.2"/>
    <property type="gene ID" value="ENSMUSG00000064284.13"/>
</dbReference>
<dbReference type="Ensembl" id="ENSMUST00000150995.8">
    <property type="protein sequence ID" value="ENSMUSP00000123174.2"/>
    <property type="gene ID" value="ENSMUSG00000064284.13"/>
</dbReference>
<dbReference type="GeneID" id="72355"/>
<dbReference type="KEGG" id="mmu:72355"/>
<dbReference type="UCSC" id="uc007xdl.2">
    <property type="organism name" value="mouse"/>
</dbReference>
<dbReference type="AGR" id="MGI:1919605"/>
<dbReference type="CTD" id="150383"/>
<dbReference type="MGI" id="MGI:1919605">
    <property type="gene designation" value="Cdpf1"/>
</dbReference>
<dbReference type="VEuPathDB" id="HostDB:ENSMUSG00000064284"/>
<dbReference type="eggNOG" id="KOG4543">
    <property type="taxonomic scope" value="Eukaryota"/>
</dbReference>
<dbReference type="GeneTree" id="ENSGT00390000007925"/>
<dbReference type="HOGENOM" id="CLU_138011_0_0_1"/>
<dbReference type="InParanoid" id="Q8R3A2"/>
<dbReference type="OMA" id="CDMHELV"/>
<dbReference type="OrthoDB" id="191995at2759"/>
<dbReference type="PhylomeDB" id="Q8R3A2"/>
<dbReference type="TreeFam" id="TF313933"/>
<dbReference type="BioGRID-ORCS" id="72355">
    <property type="hits" value="2 hits in 76 CRISPR screens"/>
</dbReference>
<dbReference type="ChiTaRS" id="Cdpf1">
    <property type="organism name" value="mouse"/>
</dbReference>
<dbReference type="PRO" id="PR:Q8R3A2"/>
<dbReference type="Proteomes" id="UP000000589">
    <property type="component" value="Chromosome 15"/>
</dbReference>
<dbReference type="RNAct" id="Q8R3A2">
    <property type="molecule type" value="protein"/>
</dbReference>
<dbReference type="Bgee" id="ENSMUSG00000064284">
    <property type="expression patterns" value="Expressed in yolk sac and 190 other cell types or tissues"/>
</dbReference>
<dbReference type="ExpressionAtlas" id="Q8R3A2">
    <property type="expression patterns" value="baseline and differential"/>
</dbReference>
<dbReference type="InterPro" id="IPR042426">
    <property type="entry name" value="CDPF1"/>
</dbReference>
<dbReference type="InterPro" id="IPR018785">
    <property type="entry name" value="CDPF1_dom"/>
</dbReference>
<dbReference type="PANTHER" id="PTHR31849:SF1">
    <property type="entry name" value="CYSTEINE-RICH DPF MOTIF DOMAIN-CONTAINING PROTEIN 1"/>
    <property type="match status" value="1"/>
</dbReference>
<dbReference type="PANTHER" id="PTHR31849">
    <property type="entry name" value="CYSTEINE-RICH PDF MOTIF DOMAIN-CONTAINING PROTEIN 1"/>
    <property type="match status" value="1"/>
</dbReference>
<dbReference type="Pfam" id="PF10170">
    <property type="entry name" value="C6_DPF"/>
    <property type="match status" value="1"/>
</dbReference>
<dbReference type="PRINTS" id="PR01995">
    <property type="entry name" value="UPF0595"/>
</dbReference>
<name>CDPF1_MOUSE</name>
<evidence type="ECO:0000305" key="1"/>
<organism>
    <name type="scientific">Mus musculus</name>
    <name type="common">Mouse</name>
    <dbReference type="NCBI Taxonomy" id="10090"/>
    <lineage>
        <taxon>Eukaryota</taxon>
        <taxon>Metazoa</taxon>
        <taxon>Chordata</taxon>
        <taxon>Craniata</taxon>
        <taxon>Vertebrata</taxon>
        <taxon>Euteleostomi</taxon>
        <taxon>Mammalia</taxon>
        <taxon>Eutheria</taxon>
        <taxon>Euarchontoglires</taxon>
        <taxon>Glires</taxon>
        <taxon>Rodentia</taxon>
        <taxon>Myomorpha</taxon>
        <taxon>Muroidea</taxon>
        <taxon>Muridae</taxon>
        <taxon>Murinae</taxon>
        <taxon>Mus</taxon>
        <taxon>Mus</taxon>
    </lineage>
</organism>
<proteinExistence type="inferred from homology"/>
<keyword id="KW-1185">Reference proteome</keyword>
<gene>
    <name type="primary">Cdpf1</name>
</gene>
<reference key="1">
    <citation type="journal article" date="2009" name="PLoS Biol.">
        <title>Lineage-specific biology revealed by a finished genome assembly of the mouse.</title>
        <authorList>
            <person name="Church D.M."/>
            <person name="Goodstadt L."/>
            <person name="Hillier L.W."/>
            <person name="Zody M.C."/>
            <person name="Goldstein S."/>
            <person name="She X."/>
            <person name="Bult C.J."/>
            <person name="Agarwala R."/>
            <person name="Cherry J.L."/>
            <person name="DiCuccio M."/>
            <person name="Hlavina W."/>
            <person name="Kapustin Y."/>
            <person name="Meric P."/>
            <person name="Maglott D."/>
            <person name="Birtle Z."/>
            <person name="Marques A.C."/>
            <person name="Graves T."/>
            <person name="Zhou S."/>
            <person name="Teague B."/>
            <person name="Potamousis K."/>
            <person name="Churas C."/>
            <person name="Place M."/>
            <person name="Herschleb J."/>
            <person name="Runnheim R."/>
            <person name="Forrest D."/>
            <person name="Amos-Landgraf J."/>
            <person name="Schwartz D.C."/>
            <person name="Cheng Z."/>
            <person name="Lindblad-Toh K."/>
            <person name="Eichler E.E."/>
            <person name="Ponting C.P."/>
        </authorList>
    </citation>
    <scope>NUCLEOTIDE SEQUENCE [LARGE SCALE GENOMIC DNA]</scope>
    <source>
        <strain>C57BL/6J</strain>
    </source>
</reference>
<reference key="2">
    <citation type="journal article" date="2004" name="Genome Res.">
        <title>The status, quality, and expansion of the NIH full-length cDNA project: the Mammalian Gene Collection (MGC).</title>
        <authorList>
            <consortium name="The MGC Project Team"/>
        </authorList>
    </citation>
    <scope>NUCLEOTIDE SEQUENCE [LARGE SCALE MRNA]</scope>
    <source>
        <strain>FVB/N-3</strain>
        <tissue>Mammary tumor</tissue>
    </source>
</reference>
<feature type="chain" id="PRO_0000341361" description="Cysteine-rich DPF motif domain-containing protein 1">
    <location>
        <begin position="1"/>
        <end position="119"/>
    </location>
</feature>
<feature type="sequence conflict" description="In Ref. 2; AAH25858." evidence="1" ref="2">
    <original>T</original>
    <variation>A</variation>
    <location>
        <position position="111"/>
    </location>
</feature>
<feature type="sequence conflict" description="In Ref. 2; AAH25858." evidence="1" ref="2">
    <original>N</original>
    <variation>S</variation>
    <location>
        <position position="117"/>
    </location>
</feature>
<comment type="similarity">
    <text evidence="1">Belongs to the CDPF1 family.</text>
</comment>
<sequence>MASETEPRPLGTFECQLCALSAPYSYVGQKPPDTQAVVLLEESYIMKDPFSSDKARFLVLGSRCSVCSRLVCVGPDCSLFYSKRVCLPCVQENMSAFPQEIQQDVEKRKSTSKKHSNRP</sequence>
<accession>Q8R3A2</accession>
<accession>E9PUA4</accession>
<protein>
    <recommendedName>
        <fullName>Cysteine-rich DPF motif domain-containing protein 1</fullName>
    </recommendedName>
</protein>